<organism>
    <name type="scientific">Arabidopsis thaliana</name>
    <name type="common">Mouse-ear cress</name>
    <dbReference type="NCBI Taxonomy" id="3702"/>
    <lineage>
        <taxon>Eukaryota</taxon>
        <taxon>Viridiplantae</taxon>
        <taxon>Streptophyta</taxon>
        <taxon>Embryophyta</taxon>
        <taxon>Tracheophyta</taxon>
        <taxon>Spermatophyta</taxon>
        <taxon>Magnoliopsida</taxon>
        <taxon>eudicotyledons</taxon>
        <taxon>Gunneridae</taxon>
        <taxon>Pentapetalae</taxon>
        <taxon>rosids</taxon>
        <taxon>malvids</taxon>
        <taxon>Brassicales</taxon>
        <taxon>Brassicaceae</taxon>
        <taxon>Camelineae</taxon>
        <taxon>Arabidopsis</taxon>
    </lineage>
</organism>
<gene>
    <name evidence="6" type="primary">KIN7M</name>
    <name evidence="7" type="ordered locus">At2g21380</name>
    <name evidence="8" type="ORF">F3K23.14</name>
</gene>
<feature type="transit peptide" description="Chloroplast" evidence="1">
    <location>
        <begin position="1"/>
        <end position="60"/>
    </location>
</feature>
<feature type="chain" id="PRO_0000436471" description="Kinesin-like protein KIN-7M, chloroplastic" evidence="1">
    <location>
        <begin position="61"/>
        <end position="1058"/>
    </location>
</feature>
<feature type="domain" description="Kinesin motor" evidence="3">
    <location>
        <begin position="104"/>
        <end position="421"/>
    </location>
</feature>
<feature type="zinc finger region" description="RING-type" evidence="2">
    <location>
        <begin position="1011"/>
        <end position="1046"/>
    </location>
</feature>
<feature type="region of interest" description="Disordered" evidence="4">
    <location>
        <begin position="1"/>
        <end position="92"/>
    </location>
</feature>
<feature type="region of interest" description="Disordered" evidence="4">
    <location>
        <begin position="549"/>
        <end position="578"/>
    </location>
</feature>
<feature type="region of interest" description="Disordered" evidence="4">
    <location>
        <begin position="824"/>
        <end position="847"/>
    </location>
</feature>
<feature type="region of interest" description="Disordered" evidence="4">
    <location>
        <begin position="922"/>
        <end position="946"/>
    </location>
</feature>
<feature type="coiled-coil region" evidence="1">
    <location>
        <begin position="422"/>
        <end position="509"/>
    </location>
</feature>
<feature type="coiled-coil region" evidence="1">
    <location>
        <begin position="621"/>
        <end position="658"/>
    </location>
</feature>
<feature type="coiled-coil region" evidence="1">
    <location>
        <begin position="704"/>
        <end position="826"/>
    </location>
</feature>
<feature type="coiled-coil region" evidence="1">
    <location>
        <begin position="873"/>
        <end position="904"/>
    </location>
</feature>
<feature type="coiled-coil region" evidence="1">
    <location>
        <begin position="935"/>
        <end position="999"/>
    </location>
</feature>
<feature type="compositionally biased region" description="Basic residues" evidence="4">
    <location>
        <begin position="8"/>
        <end position="19"/>
    </location>
</feature>
<feature type="compositionally biased region" description="Low complexity" evidence="4">
    <location>
        <begin position="23"/>
        <end position="49"/>
    </location>
</feature>
<feature type="compositionally biased region" description="Polar residues" evidence="4">
    <location>
        <begin position="50"/>
        <end position="70"/>
    </location>
</feature>
<feature type="compositionally biased region" description="Basic and acidic residues" evidence="4">
    <location>
        <begin position="558"/>
        <end position="570"/>
    </location>
</feature>
<feature type="compositionally biased region" description="Low complexity" evidence="4">
    <location>
        <begin position="824"/>
        <end position="838"/>
    </location>
</feature>
<feature type="compositionally biased region" description="Basic and acidic residues" evidence="4">
    <location>
        <begin position="927"/>
        <end position="946"/>
    </location>
</feature>
<feature type="binding site" evidence="3">
    <location>
        <begin position="184"/>
        <end position="191"/>
    </location>
    <ligand>
        <name>ATP</name>
        <dbReference type="ChEBI" id="CHEBI:30616"/>
    </ligand>
</feature>
<reference key="1">
    <citation type="journal article" date="1999" name="Nature">
        <title>Sequence and analysis of chromosome 2 of the plant Arabidopsis thaliana.</title>
        <authorList>
            <person name="Lin X."/>
            <person name="Kaul S."/>
            <person name="Rounsley S.D."/>
            <person name="Shea T.P."/>
            <person name="Benito M.-I."/>
            <person name="Town C.D."/>
            <person name="Fujii C.Y."/>
            <person name="Mason T.M."/>
            <person name="Bowman C.L."/>
            <person name="Barnstead M.E."/>
            <person name="Feldblyum T.V."/>
            <person name="Buell C.R."/>
            <person name="Ketchum K.A."/>
            <person name="Lee J.J."/>
            <person name="Ronning C.M."/>
            <person name="Koo H.L."/>
            <person name="Moffat K.S."/>
            <person name="Cronin L.A."/>
            <person name="Shen M."/>
            <person name="Pai G."/>
            <person name="Van Aken S."/>
            <person name="Umayam L."/>
            <person name="Tallon L.J."/>
            <person name="Gill J.E."/>
            <person name="Adams M.D."/>
            <person name="Carrera A.J."/>
            <person name="Creasy T.H."/>
            <person name="Goodman H.M."/>
            <person name="Somerville C.R."/>
            <person name="Copenhaver G.P."/>
            <person name="Preuss D."/>
            <person name="Nierman W.C."/>
            <person name="White O."/>
            <person name="Eisen J.A."/>
            <person name="Salzberg S.L."/>
            <person name="Fraser C.M."/>
            <person name="Venter J.C."/>
        </authorList>
    </citation>
    <scope>NUCLEOTIDE SEQUENCE [LARGE SCALE GENOMIC DNA]</scope>
    <source>
        <strain>cv. Columbia</strain>
    </source>
</reference>
<reference key="2">
    <citation type="journal article" date="2017" name="Plant J.">
        <title>Araport11: a complete reannotation of the Arabidopsis thaliana reference genome.</title>
        <authorList>
            <person name="Cheng C.Y."/>
            <person name="Krishnakumar V."/>
            <person name="Chan A.P."/>
            <person name="Thibaud-Nissen F."/>
            <person name="Schobel S."/>
            <person name="Town C.D."/>
        </authorList>
    </citation>
    <scope>GENOME REANNOTATION</scope>
    <source>
        <strain>cv. Columbia</strain>
    </source>
</reference>
<reference key="3">
    <citation type="journal article" date="2003" name="Science">
        <title>Empirical analysis of transcriptional activity in the Arabidopsis genome.</title>
        <authorList>
            <person name="Yamada K."/>
            <person name="Lim J."/>
            <person name="Dale J.M."/>
            <person name="Chen H."/>
            <person name="Shinn P."/>
            <person name="Palm C.J."/>
            <person name="Southwick A.M."/>
            <person name="Wu H.C."/>
            <person name="Kim C.J."/>
            <person name="Nguyen M."/>
            <person name="Pham P.K."/>
            <person name="Cheuk R.F."/>
            <person name="Karlin-Newmann G."/>
            <person name="Liu S.X."/>
            <person name="Lam B."/>
            <person name="Sakano H."/>
            <person name="Wu T."/>
            <person name="Yu G."/>
            <person name="Miranda M."/>
            <person name="Quach H.L."/>
            <person name="Tripp M."/>
            <person name="Chang C.H."/>
            <person name="Lee J.M."/>
            <person name="Toriumi M.J."/>
            <person name="Chan M.M."/>
            <person name="Tang C.C."/>
            <person name="Onodera C.S."/>
            <person name="Deng J.M."/>
            <person name="Akiyama K."/>
            <person name="Ansari Y."/>
            <person name="Arakawa T."/>
            <person name="Banh J."/>
            <person name="Banno F."/>
            <person name="Bowser L."/>
            <person name="Brooks S.Y."/>
            <person name="Carninci P."/>
            <person name="Chao Q."/>
            <person name="Choy N."/>
            <person name="Enju A."/>
            <person name="Goldsmith A.D."/>
            <person name="Gurjal M."/>
            <person name="Hansen N.F."/>
            <person name="Hayashizaki Y."/>
            <person name="Johnson-Hopson C."/>
            <person name="Hsuan V.W."/>
            <person name="Iida K."/>
            <person name="Karnes M."/>
            <person name="Khan S."/>
            <person name="Koesema E."/>
            <person name="Ishida J."/>
            <person name="Jiang P.X."/>
            <person name="Jones T."/>
            <person name="Kawai J."/>
            <person name="Kamiya A."/>
            <person name="Meyers C."/>
            <person name="Nakajima M."/>
            <person name="Narusaka M."/>
            <person name="Seki M."/>
            <person name="Sakurai T."/>
            <person name="Satou M."/>
            <person name="Tamse R."/>
            <person name="Vaysberg M."/>
            <person name="Wallender E.K."/>
            <person name="Wong C."/>
            <person name="Yamamura Y."/>
            <person name="Yuan S."/>
            <person name="Shinozaki K."/>
            <person name="Davis R.W."/>
            <person name="Theologis A."/>
            <person name="Ecker J.R."/>
        </authorList>
    </citation>
    <scope>NUCLEOTIDE SEQUENCE [LARGE SCALE MRNA]</scope>
    <source>
        <strain>cv. Columbia</strain>
    </source>
</reference>
<reference key="4">
    <citation type="journal article" date="2001" name="BMC Genomics">
        <title>Kinesins in the Arabidopsis genome: a comparative analysis among eukaryotes.</title>
        <authorList>
            <person name="Reddy A.S."/>
            <person name="Day I.S."/>
        </authorList>
    </citation>
    <scope>GENE FAMILY</scope>
</reference>
<reference key="5">
    <citation type="journal article" date="2006" name="BMC Genomics">
        <title>Comprehensive comparative analysis of kinesins in photosynthetic eukaryotes.</title>
        <authorList>
            <person name="Richardson D.N."/>
            <person name="Simmons M.P."/>
            <person name="Reddy A.S."/>
        </authorList>
    </citation>
    <scope>GENE FAMILY</scope>
    <scope>NOMENCLATURE</scope>
</reference>
<reference key="6">
    <citation type="journal article" date="2012" name="Protoplasma">
        <title>Functions of the Arabidopsis kinesin superfamily of microtubule-based motor proteins.</title>
        <authorList>
            <person name="Zhu C."/>
            <person name="Dixit R."/>
        </authorList>
    </citation>
    <scope>REVIEW</scope>
</reference>
<proteinExistence type="evidence at transcript level"/>
<accession>Q9SJU0</accession>
<accession>Q94BQ1</accession>
<dbReference type="EMBL" id="AC006841">
    <property type="protein sequence ID" value="AAD23684.2"/>
    <property type="molecule type" value="Genomic_DNA"/>
</dbReference>
<dbReference type="EMBL" id="CP002685">
    <property type="protein sequence ID" value="AEC07168.1"/>
    <property type="molecule type" value="Genomic_DNA"/>
</dbReference>
<dbReference type="EMBL" id="CP002685">
    <property type="protein sequence ID" value="ANM62121.1"/>
    <property type="molecule type" value="Genomic_DNA"/>
</dbReference>
<dbReference type="EMBL" id="AY039966">
    <property type="protein sequence ID" value="AAK64143.1"/>
    <property type="molecule type" value="mRNA"/>
</dbReference>
<dbReference type="EMBL" id="AY150452">
    <property type="protein sequence ID" value="AAN12893.1"/>
    <property type="molecule type" value="mRNA"/>
</dbReference>
<dbReference type="PIR" id="E84600">
    <property type="entry name" value="E84600"/>
</dbReference>
<dbReference type="RefSeq" id="NP_001324300.1">
    <property type="nucleotide sequence ID" value="NM_001335746.1"/>
</dbReference>
<dbReference type="RefSeq" id="NP_565510.1">
    <property type="nucleotide sequence ID" value="NM_127709.3"/>
</dbReference>
<dbReference type="SMR" id="Q9SJU0"/>
<dbReference type="FunCoup" id="Q9SJU0">
    <property type="interactions" value="382"/>
</dbReference>
<dbReference type="IntAct" id="Q9SJU0">
    <property type="interactions" value="4"/>
</dbReference>
<dbReference type="STRING" id="3702.Q9SJU0"/>
<dbReference type="GlyGen" id="Q9SJU0">
    <property type="glycosylation" value="1 site"/>
</dbReference>
<dbReference type="iPTMnet" id="Q9SJU0"/>
<dbReference type="PaxDb" id="3702-AT2G21380.1"/>
<dbReference type="ProteomicsDB" id="237140"/>
<dbReference type="EnsemblPlants" id="AT2G21380.1">
    <property type="protein sequence ID" value="AT2G21380.1"/>
    <property type="gene ID" value="AT2G21380"/>
</dbReference>
<dbReference type="EnsemblPlants" id="AT2G21380.2">
    <property type="protein sequence ID" value="AT2G21380.2"/>
    <property type="gene ID" value="AT2G21380"/>
</dbReference>
<dbReference type="GeneID" id="816676"/>
<dbReference type="Gramene" id="AT2G21380.1">
    <property type="protein sequence ID" value="AT2G21380.1"/>
    <property type="gene ID" value="AT2G21380"/>
</dbReference>
<dbReference type="Gramene" id="AT2G21380.2">
    <property type="protein sequence ID" value="AT2G21380.2"/>
    <property type="gene ID" value="AT2G21380"/>
</dbReference>
<dbReference type="KEGG" id="ath:AT2G21380"/>
<dbReference type="Araport" id="AT2G21380"/>
<dbReference type="TAIR" id="AT2G21380">
    <property type="gene designation" value="KIN7.2"/>
</dbReference>
<dbReference type="eggNOG" id="KOG0242">
    <property type="taxonomic scope" value="Eukaryota"/>
</dbReference>
<dbReference type="HOGENOM" id="CLU_004957_0_0_1"/>
<dbReference type="InParanoid" id="Q9SJU0"/>
<dbReference type="OMA" id="NRNGTRP"/>
<dbReference type="PhylomeDB" id="Q9SJU0"/>
<dbReference type="PRO" id="PR:Q9SJU0"/>
<dbReference type="Proteomes" id="UP000006548">
    <property type="component" value="Chromosome 2"/>
</dbReference>
<dbReference type="ExpressionAtlas" id="Q9SJU0">
    <property type="expression patterns" value="baseline and differential"/>
</dbReference>
<dbReference type="GO" id="GO:0009507">
    <property type="term" value="C:chloroplast"/>
    <property type="evidence" value="ECO:0007669"/>
    <property type="project" value="UniProtKB-SubCell"/>
</dbReference>
<dbReference type="GO" id="GO:0005874">
    <property type="term" value="C:microtubule"/>
    <property type="evidence" value="ECO:0007669"/>
    <property type="project" value="UniProtKB-KW"/>
</dbReference>
<dbReference type="GO" id="GO:0005524">
    <property type="term" value="F:ATP binding"/>
    <property type="evidence" value="ECO:0007669"/>
    <property type="project" value="UniProtKB-KW"/>
</dbReference>
<dbReference type="GO" id="GO:0008017">
    <property type="term" value="F:microtubule binding"/>
    <property type="evidence" value="ECO:0007669"/>
    <property type="project" value="InterPro"/>
</dbReference>
<dbReference type="GO" id="GO:0003777">
    <property type="term" value="F:microtubule motor activity"/>
    <property type="evidence" value="ECO:0007669"/>
    <property type="project" value="InterPro"/>
</dbReference>
<dbReference type="GO" id="GO:0008270">
    <property type="term" value="F:zinc ion binding"/>
    <property type="evidence" value="ECO:0007669"/>
    <property type="project" value="UniProtKB-KW"/>
</dbReference>
<dbReference type="GO" id="GO:0007018">
    <property type="term" value="P:microtubule-based movement"/>
    <property type="evidence" value="ECO:0007669"/>
    <property type="project" value="InterPro"/>
</dbReference>
<dbReference type="CDD" id="cd01374">
    <property type="entry name" value="KISc_CENP_E"/>
    <property type="match status" value="1"/>
</dbReference>
<dbReference type="CDD" id="cd16649">
    <property type="entry name" value="mRING-HC-C3HC5_CGRF1-like"/>
    <property type="match status" value="1"/>
</dbReference>
<dbReference type="FunFam" id="3.30.40.10:FF:000148">
    <property type="entry name" value="Kinesin-like protein KIN-7D, mitochondrial"/>
    <property type="match status" value="1"/>
</dbReference>
<dbReference type="FunFam" id="3.40.850.10:FF:000014">
    <property type="entry name" value="Kinesin-like protein KIN-7G"/>
    <property type="match status" value="1"/>
</dbReference>
<dbReference type="Gene3D" id="3.40.850.10">
    <property type="entry name" value="Kinesin motor domain"/>
    <property type="match status" value="1"/>
</dbReference>
<dbReference type="Gene3D" id="3.30.40.10">
    <property type="entry name" value="Zinc/RING finger domain, C3HC4 (zinc finger)"/>
    <property type="match status" value="1"/>
</dbReference>
<dbReference type="InterPro" id="IPR027640">
    <property type="entry name" value="Kinesin-like_fam"/>
</dbReference>
<dbReference type="InterPro" id="IPR019821">
    <property type="entry name" value="Kinesin_motor_CS"/>
</dbReference>
<dbReference type="InterPro" id="IPR001752">
    <property type="entry name" value="Kinesin_motor_dom"/>
</dbReference>
<dbReference type="InterPro" id="IPR036961">
    <property type="entry name" value="Kinesin_motor_dom_sf"/>
</dbReference>
<dbReference type="InterPro" id="IPR027417">
    <property type="entry name" value="P-loop_NTPase"/>
</dbReference>
<dbReference type="InterPro" id="IPR001841">
    <property type="entry name" value="Znf_RING"/>
</dbReference>
<dbReference type="InterPro" id="IPR013083">
    <property type="entry name" value="Znf_RING/FYVE/PHD"/>
</dbReference>
<dbReference type="PANTHER" id="PTHR47968">
    <property type="entry name" value="CENTROMERE PROTEIN E"/>
    <property type="match status" value="1"/>
</dbReference>
<dbReference type="PANTHER" id="PTHR47968:SF35">
    <property type="entry name" value="KINESIN-LIKE PROTEIN KIN-7D, MITOCHONDRIAL ISOFORM X1"/>
    <property type="match status" value="1"/>
</dbReference>
<dbReference type="Pfam" id="PF00225">
    <property type="entry name" value="Kinesin"/>
    <property type="match status" value="1"/>
</dbReference>
<dbReference type="Pfam" id="PF13920">
    <property type="entry name" value="zf-C3HC4_3"/>
    <property type="match status" value="1"/>
</dbReference>
<dbReference type="PRINTS" id="PR00380">
    <property type="entry name" value="KINESINHEAVY"/>
</dbReference>
<dbReference type="SMART" id="SM00129">
    <property type="entry name" value="KISc"/>
    <property type="match status" value="1"/>
</dbReference>
<dbReference type="SUPFAM" id="SSF52540">
    <property type="entry name" value="P-loop containing nucleoside triphosphate hydrolases"/>
    <property type="match status" value="1"/>
</dbReference>
<dbReference type="SUPFAM" id="SSF57850">
    <property type="entry name" value="RING/U-box"/>
    <property type="match status" value="1"/>
</dbReference>
<dbReference type="PROSITE" id="PS00411">
    <property type="entry name" value="KINESIN_MOTOR_1"/>
    <property type="match status" value="1"/>
</dbReference>
<dbReference type="PROSITE" id="PS50067">
    <property type="entry name" value="KINESIN_MOTOR_2"/>
    <property type="match status" value="1"/>
</dbReference>
<dbReference type="PROSITE" id="PS50089">
    <property type="entry name" value="ZF_RING_2"/>
    <property type="match status" value="1"/>
</dbReference>
<evidence type="ECO:0000255" key="1"/>
<evidence type="ECO:0000255" key="2">
    <source>
        <dbReference type="PROSITE-ProRule" id="PRU00175"/>
    </source>
</evidence>
<evidence type="ECO:0000255" key="3">
    <source>
        <dbReference type="PROSITE-ProRule" id="PRU00283"/>
    </source>
</evidence>
<evidence type="ECO:0000256" key="4">
    <source>
        <dbReference type="SAM" id="MobiDB-lite"/>
    </source>
</evidence>
<evidence type="ECO:0000303" key="5">
    <source>
    </source>
</evidence>
<evidence type="ECO:0000305" key="6"/>
<evidence type="ECO:0000312" key="7">
    <source>
        <dbReference type="Araport" id="AT2G21380"/>
    </source>
</evidence>
<evidence type="ECO:0000312" key="8">
    <source>
        <dbReference type="EMBL" id="AAD23684.2"/>
    </source>
</evidence>
<protein>
    <recommendedName>
        <fullName evidence="6">Kinesin-like protein KIN-7M, chloroplastic</fullName>
    </recommendedName>
</protein>
<comment type="subcellular location">
    <subcellularLocation>
        <location evidence="1">Plastid</location>
        <location evidence="1">Chloroplast</location>
    </subcellularLocation>
</comment>
<comment type="similarity">
    <text evidence="5">Belongs to the TRAFAC class myosin-kinesin ATPase superfamily. Kinesin family. KIN-7 subfamily.</text>
</comment>
<sequence>MASSSSRTRSRSPFSHRRPPSPYSSASSTSSSLINNRLLPRSSSTPTSTVYNSGGVTGSRSMSITRTISDSGPIGGSGTYGAQSYPSEGLIGESGQTITSERDSISVTVRFRPMSEREYQRGDEIVWYPDADKMVRNEYNPLTAYAFDKVFGPQSTTPEVYDVAAKPVVKAAMEGVNGTVFAYGVTSSGKTHTMHGDQDFPGIIPLAIKDVFSIIQETTGREFLLRVSYLEIYNEVINDLLDPTGQNLRIREDSQGTYVEGIKEEVVLSPGHALSFIAAGEEHRHVGSNNFNLMSSRSHTIFTLMIESSAHGDQYDGVIFSQLNLIDLAGSESSKTETTGLRRKEGAYINKSLLTLGTVIGKLTEGKTTHVPFRDSKLTRLLQSSLSGHGHVSLICTVTPASSSTEETHNTLKFASRAKRIEINASRNKIIDEKSLIKKYQKEISTLKVELDQLRRGVLVGVSHEELLSLKQQLQEGQVKMQSRLEEEEEAKAALMSRIQKLTKLILVSTKNSIPGYLGDTPAHSRSISAGKDDKLDSLLLDSDNLASPSSTLSLASDARRSSSKFKDENSPVGSRAELTQGVMTPDEMDLLVEQVKMLAGEIAFGTSTLKRLVDQSMNDPENSKTQIQNLENDIQEKQRQMKSLEQRITESGEASIANASSIEMQEKVMRLMTQCNEKSFELEIISADNRILQEQLQTKCTENNELHEKVHLLEQRLSSQKATLSCCDVVTEEYVDELKKKVQSQEIENEKLKLEHVQSVEEKSGLRVQNQKLAEEASYAKELASAAAIELKNLADEVTKLSLQNAKLEKELVAARDLAAAAQKRNNNSMNSAANRNGTRPGRKARISDSWNLNQENLTMELQARKQREAVLEAALAEKEYIEEEFRKKAEEAKRREEALENDLANMWVLVAKLKKANSGALSIQKSDEAEPAKEDEVTELDNKNEQNAILKERQLVNGHEEVIVAKAEETPKEEPLVARLKARMQEMKEKEMKSQAAAAANADANSHICKVCFESPTATILLPCRHFCLCKSCSLACSECPICRTKISDRLFAFPS</sequence>
<keyword id="KW-0067">ATP-binding</keyword>
<keyword id="KW-0150">Chloroplast</keyword>
<keyword id="KW-0175">Coiled coil</keyword>
<keyword id="KW-0479">Metal-binding</keyword>
<keyword id="KW-0493">Microtubule</keyword>
<keyword id="KW-0505">Motor protein</keyword>
<keyword id="KW-0547">Nucleotide-binding</keyword>
<keyword id="KW-0934">Plastid</keyword>
<keyword id="KW-1185">Reference proteome</keyword>
<keyword id="KW-0809">Transit peptide</keyword>
<keyword id="KW-0862">Zinc</keyword>
<keyword id="KW-0863">Zinc-finger</keyword>
<name>KN7M_ARATH</name>